<dbReference type="EMBL" id="L42023">
    <property type="protein sequence ID" value="AAC22944.1"/>
    <property type="molecule type" value="Genomic_DNA"/>
</dbReference>
<dbReference type="PIR" id="D64170">
    <property type="entry name" value="D64170"/>
</dbReference>
<dbReference type="RefSeq" id="NP_439449.1">
    <property type="nucleotide sequence ID" value="NC_000907.1"/>
</dbReference>
<dbReference type="STRING" id="71421.HI_1298"/>
<dbReference type="EnsemblBacteria" id="AAC22944">
    <property type="protein sequence ID" value="AAC22944"/>
    <property type="gene ID" value="HI_1298"/>
</dbReference>
<dbReference type="KEGG" id="hin:HI_1298"/>
<dbReference type="PATRIC" id="fig|71421.8.peg.1349"/>
<dbReference type="eggNOG" id="COG1346">
    <property type="taxonomic scope" value="Bacteria"/>
</dbReference>
<dbReference type="HOGENOM" id="CLU_082099_3_0_6"/>
<dbReference type="OrthoDB" id="9811701at2"/>
<dbReference type="PhylomeDB" id="P45146"/>
<dbReference type="BioCyc" id="HINF71421:G1GJ1-1323-MONOMER"/>
<dbReference type="Proteomes" id="UP000000579">
    <property type="component" value="Chromosome"/>
</dbReference>
<dbReference type="GO" id="GO:0005886">
    <property type="term" value="C:plasma membrane"/>
    <property type="evidence" value="ECO:0007669"/>
    <property type="project" value="UniProtKB-SubCell"/>
</dbReference>
<dbReference type="InterPro" id="IPR007300">
    <property type="entry name" value="CidB/LrgB"/>
</dbReference>
<dbReference type="InterPro" id="IPR005261">
    <property type="entry name" value="YohK-like"/>
</dbReference>
<dbReference type="NCBIfam" id="TIGR00659">
    <property type="entry name" value="CidB/LrgB family autolysis modulator"/>
    <property type="match status" value="1"/>
</dbReference>
<dbReference type="PANTHER" id="PTHR30249:SF0">
    <property type="entry name" value="PLASTIDAL GLYCOLATE_GLYCERATE TRANSLOCATOR 1, CHLOROPLASTIC"/>
    <property type="match status" value="1"/>
</dbReference>
<dbReference type="PANTHER" id="PTHR30249">
    <property type="entry name" value="PUTATIVE SEROTONIN TRANSPORTER"/>
    <property type="match status" value="1"/>
</dbReference>
<dbReference type="Pfam" id="PF04172">
    <property type="entry name" value="LrgB"/>
    <property type="match status" value="1"/>
</dbReference>
<organism>
    <name type="scientific">Haemophilus influenzae (strain ATCC 51907 / DSM 11121 / KW20 / Rd)</name>
    <dbReference type="NCBI Taxonomy" id="71421"/>
    <lineage>
        <taxon>Bacteria</taxon>
        <taxon>Pseudomonadati</taxon>
        <taxon>Pseudomonadota</taxon>
        <taxon>Gammaproteobacteria</taxon>
        <taxon>Pasteurellales</taxon>
        <taxon>Pasteurellaceae</taxon>
        <taxon>Haemophilus</taxon>
    </lineage>
</organism>
<keyword id="KW-1003">Cell membrane</keyword>
<keyword id="KW-0472">Membrane</keyword>
<keyword id="KW-1185">Reference proteome</keyword>
<keyword id="KW-0812">Transmembrane</keyword>
<keyword id="KW-1133">Transmembrane helix</keyword>
<proteinExistence type="inferred from homology"/>
<evidence type="ECO:0000255" key="1"/>
<evidence type="ECO:0000305" key="2"/>
<gene>
    <name type="ordered locus">HI_1298</name>
</gene>
<feature type="chain" id="PRO_0000169142" description="Uncharacterized protein HI_1298">
    <location>
        <begin position="1"/>
        <end position="231"/>
    </location>
</feature>
<feature type="transmembrane region" description="Helical" evidence="1">
    <location>
        <begin position="4"/>
        <end position="24"/>
    </location>
</feature>
<feature type="transmembrane region" description="Helical" evidence="1">
    <location>
        <begin position="29"/>
        <end position="49"/>
    </location>
</feature>
<feature type="transmembrane region" description="Helical" evidence="1">
    <location>
        <begin position="58"/>
        <end position="78"/>
    </location>
</feature>
<feature type="transmembrane region" description="Helical" evidence="1">
    <location>
        <begin position="95"/>
        <end position="115"/>
    </location>
</feature>
<feature type="transmembrane region" description="Helical" evidence="1">
    <location>
        <begin position="147"/>
        <end position="167"/>
    </location>
</feature>
<feature type="transmembrane region" description="Helical" evidence="1">
    <location>
        <begin position="211"/>
        <end position="231"/>
    </location>
</feature>
<accession>P45146</accession>
<name>Y1298_HAEIN</name>
<comment type="subcellular location">
    <subcellularLocation>
        <location evidence="2">Cell membrane</location>
        <topology evidence="2">Multi-pass membrane protein</topology>
    </subcellularLocation>
</comment>
<comment type="similarity">
    <text evidence="2">Belongs to the YohK (E.coli)/YwbG (IPA-22R) (B.subtilis) family.</text>
</comment>
<protein>
    <recommendedName>
        <fullName>Uncharacterized protein HI_1298</fullName>
    </recommendedName>
</protein>
<sequence length="231" mass="24886">MQQYIIYLYTFLTIFGFWLALQISKRWKSMIFNTFVLTVLILAAILVIGKIPYDDYMAGNAPINNLLGLSIVALALPLYEQLRQIARQWKIILSTVVIASFLAMLSGGLLALLLGSTPEMVATVLPKSITMPIAMEVSRHLGGIPAVTAVGVVVAGLQGSIFGYLVLKKLGVKHQEAIGLSVGSVSHALGTVSCMETNPTAGSYSSISLVLCGIISSILAPFVFKLIYFFV</sequence>
<reference key="1">
    <citation type="journal article" date="1995" name="Science">
        <title>Whole-genome random sequencing and assembly of Haemophilus influenzae Rd.</title>
        <authorList>
            <person name="Fleischmann R.D."/>
            <person name="Adams M.D."/>
            <person name="White O."/>
            <person name="Clayton R.A."/>
            <person name="Kirkness E.F."/>
            <person name="Kerlavage A.R."/>
            <person name="Bult C.J."/>
            <person name="Tomb J.-F."/>
            <person name="Dougherty B.A."/>
            <person name="Merrick J.M."/>
            <person name="McKenney K."/>
            <person name="Sutton G.G."/>
            <person name="FitzHugh W."/>
            <person name="Fields C.A."/>
            <person name="Gocayne J.D."/>
            <person name="Scott J.D."/>
            <person name="Shirley R."/>
            <person name="Liu L.-I."/>
            <person name="Glodek A."/>
            <person name="Kelley J.M."/>
            <person name="Weidman J.F."/>
            <person name="Phillips C.A."/>
            <person name="Spriggs T."/>
            <person name="Hedblom E."/>
            <person name="Cotton M.D."/>
            <person name="Utterback T.R."/>
            <person name="Hanna M.C."/>
            <person name="Nguyen D.T."/>
            <person name="Saudek D.M."/>
            <person name="Brandon R.C."/>
            <person name="Fine L.D."/>
            <person name="Fritchman J.L."/>
            <person name="Fuhrmann J.L."/>
            <person name="Geoghagen N.S.M."/>
            <person name="Gnehm C.L."/>
            <person name="McDonald L.A."/>
            <person name="Small K.V."/>
            <person name="Fraser C.M."/>
            <person name="Smith H.O."/>
            <person name="Venter J.C."/>
        </authorList>
    </citation>
    <scope>NUCLEOTIDE SEQUENCE [LARGE SCALE GENOMIC DNA]</scope>
    <source>
        <strain>ATCC 51907 / DSM 11121 / KW20 / Rd</strain>
    </source>
</reference>